<reference key="1">
    <citation type="submission" date="1997-07" db="EMBL/GenBank/DDBJ databases">
        <title>Sequence analysis of the 70kb region between 17 and 23 degree of the Bacillus subtilis chromosome.</title>
        <authorList>
            <person name="Haga K."/>
            <person name="Liu H."/>
            <person name="Yasumoto K."/>
            <person name="Takahashi H."/>
            <person name="Yoshikawa H."/>
        </authorList>
    </citation>
    <scope>NUCLEOTIDE SEQUENCE [GENOMIC DNA]</scope>
    <source>
        <strain>168</strain>
    </source>
</reference>
<reference key="2">
    <citation type="journal article" date="1997" name="Nature">
        <title>The complete genome sequence of the Gram-positive bacterium Bacillus subtilis.</title>
        <authorList>
            <person name="Kunst F."/>
            <person name="Ogasawara N."/>
            <person name="Moszer I."/>
            <person name="Albertini A.M."/>
            <person name="Alloni G."/>
            <person name="Azevedo V."/>
            <person name="Bertero M.G."/>
            <person name="Bessieres P."/>
            <person name="Bolotin A."/>
            <person name="Borchert S."/>
            <person name="Borriss R."/>
            <person name="Boursier L."/>
            <person name="Brans A."/>
            <person name="Braun M."/>
            <person name="Brignell S.C."/>
            <person name="Bron S."/>
            <person name="Brouillet S."/>
            <person name="Bruschi C.V."/>
            <person name="Caldwell B."/>
            <person name="Capuano V."/>
            <person name="Carter N.M."/>
            <person name="Choi S.-K."/>
            <person name="Codani J.-J."/>
            <person name="Connerton I.F."/>
            <person name="Cummings N.J."/>
            <person name="Daniel R.A."/>
            <person name="Denizot F."/>
            <person name="Devine K.M."/>
            <person name="Duesterhoeft A."/>
            <person name="Ehrlich S.D."/>
            <person name="Emmerson P.T."/>
            <person name="Entian K.-D."/>
            <person name="Errington J."/>
            <person name="Fabret C."/>
            <person name="Ferrari E."/>
            <person name="Foulger D."/>
            <person name="Fritz C."/>
            <person name="Fujita M."/>
            <person name="Fujita Y."/>
            <person name="Fuma S."/>
            <person name="Galizzi A."/>
            <person name="Galleron N."/>
            <person name="Ghim S.-Y."/>
            <person name="Glaser P."/>
            <person name="Goffeau A."/>
            <person name="Golightly E.J."/>
            <person name="Grandi G."/>
            <person name="Guiseppi G."/>
            <person name="Guy B.J."/>
            <person name="Haga K."/>
            <person name="Haiech J."/>
            <person name="Harwood C.R."/>
            <person name="Henaut A."/>
            <person name="Hilbert H."/>
            <person name="Holsappel S."/>
            <person name="Hosono S."/>
            <person name="Hullo M.-F."/>
            <person name="Itaya M."/>
            <person name="Jones L.-M."/>
            <person name="Joris B."/>
            <person name="Karamata D."/>
            <person name="Kasahara Y."/>
            <person name="Klaerr-Blanchard M."/>
            <person name="Klein C."/>
            <person name="Kobayashi Y."/>
            <person name="Koetter P."/>
            <person name="Koningstein G."/>
            <person name="Krogh S."/>
            <person name="Kumano M."/>
            <person name="Kurita K."/>
            <person name="Lapidus A."/>
            <person name="Lardinois S."/>
            <person name="Lauber J."/>
            <person name="Lazarevic V."/>
            <person name="Lee S.-M."/>
            <person name="Levine A."/>
            <person name="Liu H."/>
            <person name="Masuda S."/>
            <person name="Mauel C."/>
            <person name="Medigue C."/>
            <person name="Medina N."/>
            <person name="Mellado R.P."/>
            <person name="Mizuno M."/>
            <person name="Moestl D."/>
            <person name="Nakai S."/>
            <person name="Noback M."/>
            <person name="Noone D."/>
            <person name="O'Reilly M."/>
            <person name="Ogawa K."/>
            <person name="Ogiwara A."/>
            <person name="Oudega B."/>
            <person name="Park S.-H."/>
            <person name="Parro V."/>
            <person name="Pohl T.M."/>
            <person name="Portetelle D."/>
            <person name="Porwollik S."/>
            <person name="Prescott A.M."/>
            <person name="Presecan E."/>
            <person name="Pujic P."/>
            <person name="Purnelle B."/>
            <person name="Rapoport G."/>
            <person name="Rey M."/>
            <person name="Reynolds S."/>
            <person name="Rieger M."/>
            <person name="Rivolta C."/>
            <person name="Rocha E."/>
            <person name="Roche B."/>
            <person name="Rose M."/>
            <person name="Sadaie Y."/>
            <person name="Sato T."/>
            <person name="Scanlan E."/>
            <person name="Schleich S."/>
            <person name="Schroeter R."/>
            <person name="Scoffone F."/>
            <person name="Sekiguchi J."/>
            <person name="Sekowska A."/>
            <person name="Seror S.J."/>
            <person name="Serror P."/>
            <person name="Shin B.-S."/>
            <person name="Soldo B."/>
            <person name="Sorokin A."/>
            <person name="Tacconi E."/>
            <person name="Takagi T."/>
            <person name="Takahashi H."/>
            <person name="Takemaru K."/>
            <person name="Takeuchi M."/>
            <person name="Tamakoshi A."/>
            <person name="Tanaka T."/>
            <person name="Terpstra P."/>
            <person name="Tognoni A."/>
            <person name="Tosato V."/>
            <person name="Uchiyama S."/>
            <person name="Vandenbol M."/>
            <person name="Vannier F."/>
            <person name="Vassarotti A."/>
            <person name="Viari A."/>
            <person name="Wambutt R."/>
            <person name="Wedler E."/>
            <person name="Wedler H."/>
            <person name="Weitzenegger T."/>
            <person name="Winters P."/>
            <person name="Wipat A."/>
            <person name="Yamamoto H."/>
            <person name="Yamane K."/>
            <person name="Yasumoto K."/>
            <person name="Yata K."/>
            <person name="Yoshida K."/>
            <person name="Yoshikawa H.-F."/>
            <person name="Zumstein E."/>
            <person name="Yoshikawa H."/>
            <person name="Danchin A."/>
        </authorList>
    </citation>
    <scope>NUCLEOTIDE SEQUENCE [LARGE SCALE GENOMIC DNA]</scope>
    <source>
        <strain>168</strain>
    </source>
</reference>
<accession>O31447</accession>
<accession>Q7DL50</accession>
<sequence length="732" mass="79232">MVDEMVLITQQWLNDTYSGKHGYNPVEESGKTGWDTIYGLTRALQIELGISEPADNFGPTTQRLFKPLKRQAPDSKPSNMNFILQGALWCKGFNPGGFTGVFYEKTENAVKEFQKAAGLTTQDGIVTTLIMKALLDMSAFKLVSGGDSRIRQIQQNLNRDYNDYIGLMPCDGLYGRDTNKALIYALQKEEGMSTSVANGFFGNGTTSLCPTLTPGDSRTGFVLIVQYALYCNGKSFDPGEFDGKYGVGVVSAVKAFQEFMCLPQTGYADMPTIKALLSSSGDTTRTASACDTATIITAEKAQTLRNNGYKTVGRYLTGNVRTSSGLTSKALTSKELAVILDAGLKVFPIYQDGGYESSYFVKDQGTRDAYSAASAARRLGFPSGTTIYFAVDFDAYDYEVTDKIIPYFQEIKSAFTKMQTFSTAPKYEIGVYGPRNICIRTSEAGLTKYSFVANMSTGFSGNLGYPMPNNWAFDQFYEGTIGSGSGSIGIDKDGYSGRDSGASNVNPPSDPVYDARLRTLTDILSTIPALENLTSLANAMFEFDTTETIFTSPELDIILSTSLLATIPSEGSPNTITITNGKPGAYITGLLGDTQTSLTASQIDSYQNLLNSLSLSVRNGYLEVYVNPTAESLNIQIKIYTPDIPVGDNVTTGLTTTITFKIKTYKGVPVTSPESELALDWPSYDQYLFPVVGVAALLLIGNMGSDLTNNKGVKVATALSAMLLAIFAYYTS</sequence>
<keyword id="KW-1003">Cell membrane</keyword>
<keyword id="KW-0472">Membrane</keyword>
<keyword id="KW-1185">Reference proteome</keyword>
<keyword id="KW-0812">Transmembrane</keyword>
<keyword id="KW-1133">Transmembrane helix</keyword>
<feature type="chain" id="PRO_0000360507" description="Uncharacterized protein YbfG">
    <location>
        <begin position="1"/>
        <end position="732"/>
    </location>
</feature>
<feature type="transmembrane region" description="Helical" evidence="1">
    <location>
        <begin position="687"/>
        <end position="707"/>
    </location>
</feature>
<feature type="transmembrane region" description="Helical" evidence="1">
    <location>
        <begin position="712"/>
        <end position="732"/>
    </location>
</feature>
<comment type="subcellular location">
    <subcellularLocation>
        <location evidence="2">Cell membrane</location>
        <topology evidence="2">Multi-pass membrane protein</topology>
    </subcellularLocation>
</comment>
<comment type="similarity">
    <text evidence="2">Belongs to the FadG family.</text>
</comment>
<dbReference type="EMBL" id="AB006424">
    <property type="protein sequence ID" value="BAA33117.1"/>
    <property type="molecule type" value="Genomic_DNA"/>
</dbReference>
<dbReference type="EMBL" id="AL009126">
    <property type="protein sequence ID" value="CAB12014.1"/>
    <property type="molecule type" value="Genomic_DNA"/>
</dbReference>
<dbReference type="PIR" id="B69749">
    <property type="entry name" value="B69749"/>
</dbReference>
<dbReference type="RefSeq" id="NP_388102.1">
    <property type="nucleotide sequence ID" value="NC_000964.3"/>
</dbReference>
<dbReference type="RefSeq" id="WP_003246323.1">
    <property type="nucleotide sequence ID" value="NZ_OZ025638.1"/>
</dbReference>
<dbReference type="SMR" id="O31447"/>
<dbReference type="FunCoup" id="O31447">
    <property type="interactions" value="52"/>
</dbReference>
<dbReference type="STRING" id="224308.BSU02200"/>
<dbReference type="PaxDb" id="224308-BSU02200"/>
<dbReference type="EnsemblBacteria" id="CAB12014">
    <property type="protein sequence ID" value="CAB12014"/>
    <property type="gene ID" value="BSU_02200"/>
</dbReference>
<dbReference type="GeneID" id="938433"/>
<dbReference type="KEGG" id="bsu:BSU02200"/>
<dbReference type="PATRIC" id="fig|224308.179.peg.226"/>
<dbReference type="eggNOG" id="COG3409">
    <property type="taxonomic scope" value="Bacteria"/>
</dbReference>
<dbReference type="InParanoid" id="O31447"/>
<dbReference type="OrthoDB" id="1795295at2"/>
<dbReference type="PhylomeDB" id="O31447"/>
<dbReference type="BioCyc" id="BSUB:BSU02200-MONOMER"/>
<dbReference type="Proteomes" id="UP000001570">
    <property type="component" value="Chromosome"/>
</dbReference>
<dbReference type="GO" id="GO:0005886">
    <property type="term" value="C:plasma membrane"/>
    <property type="evidence" value="ECO:0007669"/>
    <property type="project" value="UniProtKB-SubCell"/>
</dbReference>
<dbReference type="CDD" id="cd06418">
    <property type="entry name" value="GH25_BacA-like"/>
    <property type="match status" value="1"/>
</dbReference>
<dbReference type="Gene3D" id="3.20.20.80">
    <property type="entry name" value="Glycosidases"/>
    <property type="match status" value="1"/>
</dbReference>
<dbReference type="Gene3D" id="1.10.101.10">
    <property type="entry name" value="PGBD-like superfamily/PGBD"/>
    <property type="match status" value="2"/>
</dbReference>
<dbReference type="InterPro" id="IPR017853">
    <property type="entry name" value="Glycoside_hydrolase_SF"/>
</dbReference>
<dbReference type="InterPro" id="IPR002477">
    <property type="entry name" value="Peptidoglycan-bd-like"/>
</dbReference>
<dbReference type="InterPro" id="IPR036365">
    <property type="entry name" value="PGBD-like_sf"/>
</dbReference>
<dbReference type="InterPro" id="IPR036366">
    <property type="entry name" value="PGBDSf"/>
</dbReference>
<dbReference type="InterPro" id="IPR015020">
    <property type="entry name" value="Rv2525c-like_Glyco_Hydro-like"/>
</dbReference>
<dbReference type="InterPro" id="IPR048479">
    <property type="entry name" value="Ybfg_C"/>
</dbReference>
<dbReference type="Pfam" id="PF01471">
    <property type="entry name" value="PG_binding_1"/>
    <property type="match status" value="2"/>
</dbReference>
<dbReference type="Pfam" id="PF08924">
    <property type="entry name" value="Rv2525c_GlyHyd-like"/>
    <property type="match status" value="1"/>
</dbReference>
<dbReference type="Pfam" id="PF21015">
    <property type="entry name" value="Ybfg_C"/>
    <property type="match status" value="1"/>
</dbReference>
<dbReference type="SUPFAM" id="SSF51445">
    <property type="entry name" value="(Trans)glycosidases"/>
    <property type="match status" value="1"/>
</dbReference>
<dbReference type="SUPFAM" id="SSF47090">
    <property type="entry name" value="PGBD-like"/>
    <property type="match status" value="2"/>
</dbReference>
<proteinExistence type="inferred from homology"/>
<gene>
    <name type="primary">ybfG</name>
    <name type="ordered locus">BSU02200</name>
</gene>
<evidence type="ECO:0000255" key="1"/>
<evidence type="ECO:0000305" key="2"/>
<organism>
    <name type="scientific">Bacillus subtilis (strain 168)</name>
    <dbReference type="NCBI Taxonomy" id="224308"/>
    <lineage>
        <taxon>Bacteria</taxon>
        <taxon>Bacillati</taxon>
        <taxon>Bacillota</taxon>
        <taxon>Bacilli</taxon>
        <taxon>Bacillales</taxon>
        <taxon>Bacillaceae</taxon>
        <taxon>Bacillus</taxon>
    </lineage>
</organism>
<name>YBFG_BACSU</name>
<protein>
    <recommendedName>
        <fullName>Uncharacterized protein YbfG</fullName>
    </recommendedName>
</protein>